<sequence length="448" mass="45873">MGRLFGTDGVRGVANRELTAELALALGAAAARRLSRSGAPGRRVAVLGRDPRASGEMLEAAVIAGLTSEGVDALRVGVLPTPAVAYLTGAYDADFGVMISASHNPMPDNGIKIFGPGGHKLDDDTEDQIEDLVLGVSRGPGLRPAGAGIGRVIDAEDATERYLRHVAKAATARLDDLAVVVDCAHGAASSAAPRAYRAAGARVIAINAEPNGRNINDGCGSTHLDPLRAAVLAHRADLGLAHDGDADRCLAVDANGDLVDGDAIMVVLALAMKEAGELACNTLVATVMSNLGLHLAMRSAGVTVRTTAVGDRYVLEELRAGDYSLGGEQSGHIVMPALGSTGDGIVTGLRLMTRMVQTGSSLSDLASAMRTLPQVLINVEVVDKATAAAAPSVRTAVEQAAAELGDTGRILLRPSGTEPMIRVMVEAADEGVAQRLAATVADAVSTAR</sequence>
<feature type="chain" id="PRO_0000301343" description="Phosphoglucosamine mutase">
    <location>
        <begin position="1"/>
        <end position="448"/>
    </location>
</feature>
<feature type="active site" description="Phosphoserine intermediate" evidence="1">
    <location>
        <position position="102"/>
    </location>
</feature>
<feature type="binding site" description="via phosphate group" evidence="1">
    <location>
        <position position="102"/>
    </location>
    <ligand>
        <name>Mg(2+)</name>
        <dbReference type="ChEBI" id="CHEBI:18420"/>
    </ligand>
</feature>
<feature type="binding site" evidence="1">
    <location>
        <position position="243"/>
    </location>
    <ligand>
        <name>Mg(2+)</name>
        <dbReference type="ChEBI" id="CHEBI:18420"/>
    </ligand>
</feature>
<feature type="binding site" evidence="1">
    <location>
        <position position="245"/>
    </location>
    <ligand>
        <name>Mg(2+)</name>
        <dbReference type="ChEBI" id="CHEBI:18420"/>
    </ligand>
</feature>
<feature type="binding site" evidence="1">
    <location>
        <position position="247"/>
    </location>
    <ligand>
        <name>Mg(2+)</name>
        <dbReference type="ChEBI" id="CHEBI:18420"/>
    </ligand>
</feature>
<feature type="modified residue" description="Phosphoserine" evidence="1">
    <location>
        <position position="102"/>
    </location>
</feature>
<evidence type="ECO:0000255" key="1">
    <source>
        <dbReference type="HAMAP-Rule" id="MF_01554"/>
    </source>
</evidence>
<reference key="1">
    <citation type="journal article" date="2008" name="PLoS ONE">
        <title>Genetic basis of virulence attenuation revealed by comparative genomic analysis of Mycobacterium tuberculosis strain H37Ra versus H37Rv.</title>
        <authorList>
            <person name="Zheng H."/>
            <person name="Lu L."/>
            <person name="Wang B."/>
            <person name="Pu S."/>
            <person name="Zhang X."/>
            <person name="Zhu G."/>
            <person name="Shi W."/>
            <person name="Zhang L."/>
            <person name="Wang H."/>
            <person name="Wang S."/>
            <person name="Zhao G."/>
            <person name="Zhang Y."/>
        </authorList>
    </citation>
    <scope>NUCLEOTIDE SEQUENCE [LARGE SCALE GENOMIC DNA]</scope>
    <source>
        <strain>ATCC 25177 / H37Ra</strain>
    </source>
</reference>
<proteinExistence type="inferred from homology"/>
<dbReference type="EC" id="5.4.2.10" evidence="1"/>
<dbReference type="EMBL" id="CP000611">
    <property type="protein sequence ID" value="ABQ75267.1"/>
    <property type="molecule type" value="Genomic_DNA"/>
</dbReference>
<dbReference type="RefSeq" id="WP_003418304.1">
    <property type="nucleotide sequence ID" value="NZ_CP016972.1"/>
</dbReference>
<dbReference type="SMR" id="A5U8B7"/>
<dbReference type="KEGG" id="mra:MRA_3482"/>
<dbReference type="eggNOG" id="COG1109">
    <property type="taxonomic scope" value="Bacteria"/>
</dbReference>
<dbReference type="HOGENOM" id="CLU_016950_7_0_11"/>
<dbReference type="Proteomes" id="UP000001988">
    <property type="component" value="Chromosome"/>
</dbReference>
<dbReference type="GO" id="GO:0005829">
    <property type="term" value="C:cytosol"/>
    <property type="evidence" value="ECO:0007669"/>
    <property type="project" value="TreeGrafter"/>
</dbReference>
<dbReference type="GO" id="GO:0000287">
    <property type="term" value="F:magnesium ion binding"/>
    <property type="evidence" value="ECO:0007669"/>
    <property type="project" value="UniProtKB-UniRule"/>
</dbReference>
<dbReference type="GO" id="GO:0008966">
    <property type="term" value="F:phosphoglucosamine mutase activity"/>
    <property type="evidence" value="ECO:0007669"/>
    <property type="project" value="UniProtKB-UniRule"/>
</dbReference>
<dbReference type="GO" id="GO:0004615">
    <property type="term" value="F:phosphomannomutase activity"/>
    <property type="evidence" value="ECO:0007669"/>
    <property type="project" value="TreeGrafter"/>
</dbReference>
<dbReference type="GO" id="GO:0005975">
    <property type="term" value="P:carbohydrate metabolic process"/>
    <property type="evidence" value="ECO:0007669"/>
    <property type="project" value="InterPro"/>
</dbReference>
<dbReference type="GO" id="GO:0009252">
    <property type="term" value="P:peptidoglycan biosynthetic process"/>
    <property type="evidence" value="ECO:0007669"/>
    <property type="project" value="TreeGrafter"/>
</dbReference>
<dbReference type="GO" id="GO:0006048">
    <property type="term" value="P:UDP-N-acetylglucosamine biosynthetic process"/>
    <property type="evidence" value="ECO:0007669"/>
    <property type="project" value="TreeGrafter"/>
</dbReference>
<dbReference type="CDD" id="cd05802">
    <property type="entry name" value="GlmM"/>
    <property type="match status" value="1"/>
</dbReference>
<dbReference type="FunFam" id="3.30.310.50:FF:000001">
    <property type="entry name" value="Phosphoglucosamine mutase"/>
    <property type="match status" value="1"/>
</dbReference>
<dbReference type="FunFam" id="3.40.120.10:FF:000001">
    <property type="entry name" value="Phosphoglucosamine mutase"/>
    <property type="match status" value="1"/>
</dbReference>
<dbReference type="FunFam" id="3.40.120.10:FF:000002">
    <property type="entry name" value="Phosphoglucosamine mutase"/>
    <property type="match status" value="1"/>
</dbReference>
<dbReference type="Gene3D" id="3.40.120.10">
    <property type="entry name" value="Alpha-D-Glucose-1,6-Bisphosphate, subunit A, domain 3"/>
    <property type="match status" value="3"/>
</dbReference>
<dbReference type="Gene3D" id="3.30.310.50">
    <property type="entry name" value="Alpha-D-phosphohexomutase, C-terminal domain"/>
    <property type="match status" value="1"/>
</dbReference>
<dbReference type="HAMAP" id="MF_01554_B">
    <property type="entry name" value="GlmM_B"/>
    <property type="match status" value="1"/>
</dbReference>
<dbReference type="InterPro" id="IPR005844">
    <property type="entry name" value="A-D-PHexomutase_a/b/a-I"/>
</dbReference>
<dbReference type="InterPro" id="IPR016055">
    <property type="entry name" value="A-D-PHexomutase_a/b/a-I/II/III"/>
</dbReference>
<dbReference type="InterPro" id="IPR005845">
    <property type="entry name" value="A-D-PHexomutase_a/b/a-II"/>
</dbReference>
<dbReference type="InterPro" id="IPR005846">
    <property type="entry name" value="A-D-PHexomutase_a/b/a-III"/>
</dbReference>
<dbReference type="InterPro" id="IPR005843">
    <property type="entry name" value="A-D-PHexomutase_C"/>
</dbReference>
<dbReference type="InterPro" id="IPR036900">
    <property type="entry name" value="A-D-PHexomutase_C_sf"/>
</dbReference>
<dbReference type="InterPro" id="IPR016066">
    <property type="entry name" value="A-D-PHexomutase_CS"/>
</dbReference>
<dbReference type="InterPro" id="IPR005841">
    <property type="entry name" value="Alpha-D-phosphohexomutase_SF"/>
</dbReference>
<dbReference type="InterPro" id="IPR006352">
    <property type="entry name" value="GlmM_bact"/>
</dbReference>
<dbReference type="InterPro" id="IPR050060">
    <property type="entry name" value="Phosphoglucosamine_mutase"/>
</dbReference>
<dbReference type="NCBIfam" id="TIGR01455">
    <property type="entry name" value="glmM"/>
    <property type="match status" value="1"/>
</dbReference>
<dbReference type="PANTHER" id="PTHR42946:SF1">
    <property type="entry name" value="PHOSPHOGLUCOMUTASE (ALPHA-D-GLUCOSE-1,6-BISPHOSPHATE-DEPENDENT)"/>
    <property type="match status" value="1"/>
</dbReference>
<dbReference type="PANTHER" id="PTHR42946">
    <property type="entry name" value="PHOSPHOHEXOSE MUTASE"/>
    <property type="match status" value="1"/>
</dbReference>
<dbReference type="Pfam" id="PF02878">
    <property type="entry name" value="PGM_PMM_I"/>
    <property type="match status" value="1"/>
</dbReference>
<dbReference type="Pfam" id="PF02879">
    <property type="entry name" value="PGM_PMM_II"/>
    <property type="match status" value="1"/>
</dbReference>
<dbReference type="Pfam" id="PF02880">
    <property type="entry name" value="PGM_PMM_III"/>
    <property type="match status" value="1"/>
</dbReference>
<dbReference type="Pfam" id="PF00408">
    <property type="entry name" value="PGM_PMM_IV"/>
    <property type="match status" value="1"/>
</dbReference>
<dbReference type="PRINTS" id="PR00509">
    <property type="entry name" value="PGMPMM"/>
</dbReference>
<dbReference type="SUPFAM" id="SSF55957">
    <property type="entry name" value="Phosphoglucomutase, C-terminal domain"/>
    <property type="match status" value="1"/>
</dbReference>
<dbReference type="SUPFAM" id="SSF53738">
    <property type="entry name" value="Phosphoglucomutase, first 3 domains"/>
    <property type="match status" value="3"/>
</dbReference>
<dbReference type="PROSITE" id="PS00710">
    <property type="entry name" value="PGM_PMM"/>
    <property type="match status" value="1"/>
</dbReference>
<comment type="function">
    <text evidence="1">Catalyzes the conversion of glucosamine-6-phosphate to glucosamine-1-phosphate.</text>
</comment>
<comment type="catalytic activity">
    <reaction evidence="1">
        <text>alpha-D-glucosamine 1-phosphate = D-glucosamine 6-phosphate</text>
        <dbReference type="Rhea" id="RHEA:23424"/>
        <dbReference type="ChEBI" id="CHEBI:58516"/>
        <dbReference type="ChEBI" id="CHEBI:58725"/>
        <dbReference type="EC" id="5.4.2.10"/>
    </reaction>
</comment>
<comment type="cofactor">
    <cofactor evidence="1">
        <name>Mg(2+)</name>
        <dbReference type="ChEBI" id="CHEBI:18420"/>
    </cofactor>
    <text evidence="1">Binds 1 Mg(2+) ion per subunit.</text>
</comment>
<comment type="PTM">
    <text evidence="1">Activated by phosphorylation.</text>
</comment>
<comment type="similarity">
    <text evidence="1">Belongs to the phosphohexose mutase family.</text>
</comment>
<protein>
    <recommendedName>
        <fullName evidence="1">Phosphoglucosamine mutase</fullName>
        <ecNumber evidence="1">5.4.2.10</ecNumber>
    </recommendedName>
</protein>
<accession>A5U8B7</accession>
<keyword id="KW-0413">Isomerase</keyword>
<keyword id="KW-0460">Magnesium</keyword>
<keyword id="KW-0479">Metal-binding</keyword>
<keyword id="KW-0597">Phosphoprotein</keyword>
<keyword id="KW-1185">Reference proteome</keyword>
<gene>
    <name evidence="1" type="primary">glmM</name>
    <name type="ordered locus">MRA_3482</name>
</gene>
<organism>
    <name type="scientific">Mycobacterium tuberculosis (strain ATCC 25177 / H37Ra)</name>
    <dbReference type="NCBI Taxonomy" id="419947"/>
    <lineage>
        <taxon>Bacteria</taxon>
        <taxon>Bacillati</taxon>
        <taxon>Actinomycetota</taxon>
        <taxon>Actinomycetes</taxon>
        <taxon>Mycobacteriales</taxon>
        <taxon>Mycobacteriaceae</taxon>
        <taxon>Mycobacterium</taxon>
        <taxon>Mycobacterium tuberculosis complex</taxon>
    </lineage>
</organism>
<name>GLMM_MYCTA</name>